<gene>
    <name evidence="4" type="primary">strA</name>
    <name evidence="6" type="ordered locus">gbs0949</name>
</gene>
<organism>
    <name type="scientific">Streptococcus agalactiae serotype III (strain NEM316)</name>
    <dbReference type="NCBI Taxonomy" id="211110"/>
    <lineage>
        <taxon>Bacteria</taxon>
        <taxon>Bacillati</taxon>
        <taxon>Bacillota</taxon>
        <taxon>Bacilli</taxon>
        <taxon>Lactobacillales</taxon>
        <taxon>Streptococcaceae</taxon>
        <taxon>Streptococcus</taxon>
    </lineage>
</organism>
<name>SRTA_STRA3</name>
<accession>Q8E5N2</accession>
<protein>
    <recommendedName>
        <fullName evidence="5">Sortase A</fullName>
        <ecNumber evidence="5">3.4.22.-</ecNumber>
    </recommendedName>
</protein>
<dbReference type="EC" id="3.4.22.-" evidence="5"/>
<dbReference type="EMBL" id="AL766848">
    <property type="protein sequence ID" value="CAD46608.1"/>
    <property type="molecule type" value="Genomic_DNA"/>
</dbReference>
<dbReference type="RefSeq" id="WP_001244677.1">
    <property type="nucleotide sequence ID" value="NC_004368.1"/>
</dbReference>
<dbReference type="PDB" id="7S56">
    <property type="method" value="X-ray"/>
    <property type="resolution" value="1.40 A"/>
    <property type="chains" value="A=79-247"/>
</dbReference>
<dbReference type="PDBsum" id="7S56"/>
<dbReference type="SMR" id="Q8E5N2"/>
<dbReference type="MEROPS" id="C60.006"/>
<dbReference type="KEGG" id="san:gbs0949"/>
<dbReference type="eggNOG" id="COG3764">
    <property type="taxonomic scope" value="Bacteria"/>
</dbReference>
<dbReference type="HOGENOM" id="CLU_045680_4_2_9"/>
<dbReference type="Proteomes" id="UP000000823">
    <property type="component" value="Chromosome"/>
</dbReference>
<dbReference type="GO" id="GO:0005886">
    <property type="term" value="C:plasma membrane"/>
    <property type="evidence" value="ECO:0007669"/>
    <property type="project" value="UniProtKB-SubCell"/>
</dbReference>
<dbReference type="GO" id="GO:0008234">
    <property type="term" value="F:cysteine-type peptidase activity"/>
    <property type="evidence" value="ECO:0007669"/>
    <property type="project" value="UniProtKB-KW"/>
</dbReference>
<dbReference type="GO" id="GO:0006508">
    <property type="term" value="P:proteolysis"/>
    <property type="evidence" value="ECO:0007669"/>
    <property type="project" value="UniProtKB-KW"/>
</dbReference>
<dbReference type="CDD" id="cd06165">
    <property type="entry name" value="Sortase_A"/>
    <property type="match status" value="1"/>
</dbReference>
<dbReference type="Gene3D" id="2.40.260.10">
    <property type="entry name" value="Sortase"/>
    <property type="match status" value="1"/>
</dbReference>
<dbReference type="InterPro" id="IPR005754">
    <property type="entry name" value="Sortase"/>
</dbReference>
<dbReference type="InterPro" id="IPR042007">
    <property type="entry name" value="Sortase_A"/>
</dbReference>
<dbReference type="InterPro" id="IPR023365">
    <property type="entry name" value="Sortase_dom-sf"/>
</dbReference>
<dbReference type="NCBIfam" id="TIGR01076">
    <property type="entry name" value="sortase_fam"/>
    <property type="match status" value="1"/>
</dbReference>
<dbReference type="Pfam" id="PF04203">
    <property type="entry name" value="Sortase"/>
    <property type="match status" value="1"/>
</dbReference>
<dbReference type="SUPFAM" id="SSF63817">
    <property type="entry name" value="Sortase"/>
    <property type="match status" value="1"/>
</dbReference>
<reference key="1">
    <citation type="journal article" date="2002" name="Mol. Microbiol.">
        <title>Genome sequence of Streptococcus agalactiae, a pathogen causing invasive neonatal disease.</title>
        <authorList>
            <person name="Glaser P."/>
            <person name="Rusniok C."/>
            <person name="Buchrieser C."/>
            <person name="Chevalier F."/>
            <person name="Frangeul L."/>
            <person name="Msadek T."/>
            <person name="Zouine M."/>
            <person name="Couve E."/>
            <person name="Lalioui L."/>
            <person name="Poyart C."/>
            <person name="Trieu-Cuot P."/>
            <person name="Kunst F."/>
        </authorList>
    </citation>
    <scope>NUCLEOTIDE SEQUENCE [LARGE SCALE GENOMIC DNA]</scope>
    <source>
        <strain>NEM316</strain>
    </source>
</reference>
<reference key="2">
    <citation type="journal article" date="2005" name="Infect. Immun.">
        <title>The SrtA sortase of Streptococcus agalactiae is required for cell wall anchoring of proteins containing the LPXTG motif, for adhesion to epithelial cells, and for colonization of the mouse intestine.</title>
        <authorList>
            <person name="Lalioui L."/>
            <person name="Pellegrini E."/>
            <person name="Dramsi S."/>
            <person name="Baptista M."/>
            <person name="Bourgeois N."/>
            <person name="Doucet-Populaire F."/>
            <person name="Rusniok C."/>
            <person name="Zouine M."/>
            <person name="Glaser P."/>
            <person name="Kunst F."/>
            <person name="Poyart C."/>
            <person name="Trieu-Cuot P."/>
        </authorList>
    </citation>
    <scope>FUNCTION IN VIRULENCE</scope>
    <scope>DISRUPTION PHENOTYPE</scope>
    <source>
        <strain>NEM316</strain>
    </source>
</reference>
<keyword id="KW-0002">3D-structure</keyword>
<keyword id="KW-1003">Cell membrane</keyword>
<keyword id="KW-0378">Hydrolase</keyword>
<keyword id="KW-0472">Membrane</keyword>
<keyword id="KW-0645">Protease</keyword>
<keyword id="KW-0788">Thiol protease</keyword>
<keyword id="KW-0812">Transmembrane</keyword>
<keyword id="KW-1133">Transmembrane helix</keyword>
<proteinExistence type="evidence at protein level"/>
<sequence>MRNKKKLHGFFNFVRWLLVVLLIIVGLALVFNKPIRNAFIAHQSNHYQISRVSKKTIEKNKKSKTSYDFSSVKSISTESILSAQTKSHNLPVIGGIAIPDVEINLPIFKGLGNTELSYGAGTMKENQIMGGQNNYALASHHVFGLTGSSKMLFSPLEHAKKGMKVYLTDKSKVYTYTITEISKVTPEHVEVIDDTPGKSQLTLVTCTDPEATERIIVHAELEKTGEFSTADESILKAFSKKYNQINL</sequence>
<comment type="function">
    <text evidence="1 3">Transpeptidase that anchors surface proteins to the cell wall. Recognizes and modifies its substrate by proteolytic cleavage of a C-terminal sorting signal. Following cleavage, a covalent intermediate is formed via a thioester bond between the sortase and its substrate, which is then transferred and covalently attached to the cell wall. This sortase recognizes a Leu-Pro-x-Thr-Gly (LPXTG) motif, which is cleaved by the sortase between the threonine and glycine residues (By similarity). Essential for adherence to eukaryotic cells and for binding to fibronectin and fibrinogen (PubMed:15908360).</text>
</comment>
<comment type="subcellular location">
    <subcellularLocation>
        <location evidence="1">Cell membrane</location>
        <topology evidence="1">Single-pass type II membrane protein</topology>
    </subcellularLocation>
</comment>
<comment type="disruption phenotype">
    <text evidence="3">Mutant is unable to anchor the C5a peptidase (ScpB) and Alp2 to the cell wall. Mutant is also impaired for binding to the major extracellular matrix components fibronectin and fibrinogen and displays a significant reduction in adherence to human and murine epithelial cells. Inactivation of the gene has no effect on the virulence in a neonatal rat model but strongly impairs the capacity of the strain to colonize the intestines of gnotobiotic mice in a competition assay.</text>
</comment>
<comment type="similarity">
    <text evidence="5">Belongs to the bacterial sortase family. Class A subfamily.</text>
</comment>
<feature type="chain" id="PRO_0000445347" description="Sortase A">
    <location>
        <begin position="1"/>
        <end position="247"/>
    </location>
</feature>
<feature type="topological domain" description="Cytoplasmic" evidence="5">
    <location>
        <begin position="1"/>
        <end position="9"/>
    </location>
</feature>
<feature type="transmembrane region" description="Helical; Note=Membrane anchor" evidence="2 5">
    <location>
        <begin position="10"/>
        <end position="30"/>
    </location>
</feature>
<feature type="topological domain" description="Extracellular" evidence="5">
    <location>
        <begin position="31"/>
        <end position="247"/>
    </location>
</feature>
<feature type="active site" description="Proton donor/acceptor" evidence="1">
    <location>
        <position position="140"/>
    </location>
</feature>
<feature type="active site" description="Acyl-thioester intermediate" evidence="1">
    <location>
        <position position="206"/>
    </location>
</feature>
<feature type="site" description="Transition state stabilizer" evidence="1">
    <location>
        <position position="214"/>
    </location>
</feature>
<feature type="strand" evidence="7">
    <location>
        <begin position="94"/>
        <end position="98"/>
    </location>
</feature>
<feature type="helix" evidence="7">
    <location>
        <begin position="99"/>
        <end position="101"/>
    </location>
</feature>
<feature type="strand" evidence="7">
    <location>
        <begin position="103"/>
        <end position="110"/>
    </location>
</feature>
<feature type="helix" evidence="7">
    <location>
        <begin position="113"/>
        <end position="118"/>
    </location>
</feature>
<feature type="strand" evidence="7">
    <location>
        <begin position="119"/>
        <end position="124"/>
    </location>
</feature>
<feature type="strand" evidence="7">
    <location>
        <begin position="131"/>
        <end position="138"/>
    </location>
</feature>
<feature type="helix" evidence="7">
    <location>
        <begin position="148"/>
        <end position="150"/>
    </location>
</feature>
<feature type="helix" evidence="7">
    <location>
        <begin position="154"/>
        <end position="158"/>
    </location>
</feature>
<feature type="strand" evidence="7">
    <location>
        <begin position="164"/>
        <end position="168"/>
    </location>
</feature>
<feature type="strand" evidence="7">
    <location>
        <begin position="170"/>
        <end position="184"/>
    </location>
</feature>
<feature type="helix" evidence="7">
    <location>
        <begin position="189"/>
        <end position="192"/>
    </location>
</feature>
<feature type="strand" evidence="7">
    <location>
        <begin position="200"/>
        <end position="208"/>
    </location>
</feature>
<feature type="strand" evidence="7">
    <location>
        <begin position="213"/>
        <end position="226"/>
    </location>
</feature>
<feature type="helix" evidence="7">
    <location>
        <begin position="227"/>
        <end position="229"/>
    </location>
</feature>
<feature type="helix" evidence="7">
    <location>
        <begin position="232"/>
        <end position="239"/>
    </location>
</feature>
<evidence type="ECO:0000250" key="1">
    <source>
        <dbReference type="UniProtKB" id="Q2FV99"/>
    </source>
</evidence>
<evidence type="ECO:0000255" key="2"/>
<evidence type="ECO:0000269" key="3">
    <source>
    </source>
</evidence>
<evidence type="ECO:0000303" key="4">
    <source>
    </source>
</evidence>
<evidence type="ECO:0000305" key="5"/>
<evidence type="ECO:0000312" key="6">
    <source>
        <dbReference type="EMBL" id="CAD46608.1"/>
    </source>
</evidence>
<evidence type="ECO:0007829" key="7">
    <source>
        <dbReference type="PDB" id="7S56"/>
    </source>
</evidence>